<gene>
    <name type="primary">Abca7</name>
</gene>
<dbReference type="EMBL" id="AF287141">
    <property type="protein sequence ID" value="AAK56862.1"/>
    <property type="molecule type" value="mRNA"/>
</dbReference>
<dbReference type="EMBL" id="AF287142">
    <property type="protein sequence ID" value="AAK56863.1"/>
    <property type="molecule type" value="Genomic_DNA"/>
</dbReference>
<dbReference type="EMBL" id="AF213395">
    <property type="protein sequence ID" value="AAF31434.1"/>
    <property type="status" value="ALT_FRAME"/>
    <property type="molecule type" value="mRNA"/>
</dbReference>
<dbReference type="CCDS" id="CCDS24004.1"/>
<dbReference type="RefSeq" id="NP_038878.1">
    <property type="nucleotide sequence ID" value="NM_013850.2"/>
</dbReference>
<dbReference type="RefSeq" id="XP_017169446.1">
    <property type="nucleotide sequence ID" value="XM_017313957.1"/>
</dbReference>
<dbReference type="SMR" id="Q91V24"/>
<dbReference type="FunCoup" id="Q91V24">
    <property type="interactions" value="257"/>
</dbReference>
<dbReference type="IntAct" id="Q91V24">
    <property type="interactions" value="1"/>
</dbReference>
<dbReference type="STRING" id="10090.ENSMUSP00000128121"/>
<dbReference type="GlyConnect" id="2142">
    <property type="glycosylation" value="4 N-Linked glycans (2 sites)"/>
</dbReference>
<dbReference type="GlyCosmos" id="Q91V24">
    <property type="glycosylation" value="3 sites, 4 glycans"/>
</dbReference>
<dbReference type="GlyGen" id="Q91V24">
    <property type="glycosylation" value="7 sites, 10 N-linked glycans (6 sites)"/>
</dbReference>
<dbReference type="iPTMnet" id="Q91V24"/>
<dbReference type="PhosphoSitePlus" id="Q91V24"/>
<dbReference type="SwissPalm" id="Q91V24"/>
<dbReference type="PaxDb" id="10090-ENSMUSP00000128121"/>
<dbReference type="ProteomicsDB" id="285900"/>
<dbReference type="Antibodypedia" id="22516">
    <property type="antibodies" value="184 antibodies from 31 providers"/>
</dbReference>
<dbReference type="DNASU" id="27403"/>
<dbReference type="Ensembl" id="ENSMUST00000043866.8">
    <property type="protein sequence ID" value="ENSMUSP00000043090.8"/>
    <property type="gene ID" value="ENSMUSG00000035722.16"/>
</dbReference>
<dbReference type="Ensembl" id="ENSMUST00000132517.8">
    <property type="protein sequence ID" value="ENSMUSP00000115111.2"/>
    <property type="gene ID" value="ENSMUSG00000035722.16"/>
</dbReference>
<dbReference type="GeneID" id="27403"/>
<dbReference type="KEGG" id="mmu:27403"/>
<dbReference type="UCSC" id="uc007gba.1">
    <property type="organism name" value="mouse"/>
</dbReference>
<dbReference type="AGR" id="MGI:1351646"/>
<dbReference type="CTD" id="10347"/>
<dbReference type="MGI" id="MGI:1351646">
    <property type="gene designation" value="Abca7"/>
</dbReference>
<dbReference type="VEuPathDB" id="HostDB:ENSMUSG00000035722"/>
<dbReference type="eggNOG" id="KOG0059">
    <property type="taxonomic scope" value="Eukaryota"/>
</dbReference>
<dbReference type="GeneTree" id="ENSGT00940000161439"/>
<dbReference type="HOGENOM" id="CLU_000604_19_0_1"/>
<dbReference type="InParanoid" id="Q91V24"/>
<dbReference type="OrthoDB" id="8061355at2759"/>
<dbReference type="Reactome" id="R-MMU-1369062">
    <property type="pathway name" value="ABC transporters in lipid homeostasis"/>
</dbReference>
<dbReference type="BioGRID-ORCS" id="27403">
    <property type="hits" value="1 hit in 77 CRISPR screens"/>
</dbReference>
<dbReference type="ChiTaRS" id="Abca7">
    <property type="organism name" value="mouse"/>
</dbReference>
<dbReference type="PRO" id="PR:Q91V24"/>
<dbReference type="Proteomes" id="UP000000589">
    <property type="component" value="Chromosome 10"/>
</dbReference>
<dbReference type="RNAct" id="Q91V24">
    <property type="molecule type" value="protein"/>
</dbReference>
<dbReference type="Bgee" id="ENSMUSG00000035722">
    <property type="expression patterns" value="Expressed in granulocyte and 193 other cell types or tissues"/>
</dbReference>
<dbReference type="ExpressionAtlas" id="Q91V24">
    <property type="expression patterns" value="baseline and differential"/>
</dbReference>
<dbReference type="GO" id="GO:0016324">
    <property type="term" value="C:apical plasma membrane"/>
    <property type="evidence" value="ECO:0000314"/>
    <property type="project" value="MGI"/>
</dbReference>
<dbReference type="GO" id="GO:0009986">
    <property type="term" value="C:cell surface"/>
    <property type="evidence" value="ECO:0000314"/>
    <property type="project" value="Alzheimers_University_of_Toronto"/>
</dbReference>
<dbReference type="GO" id="GO:0005737">
    <property type="term" value="C:cytoplasm"/>
    <property type="evidence" value="ECO:0000314"/>
    <property type="project" value="UniProtKB"/>
</dbReference>
<dbReference type="GO" id="GO:0031901">
    <property type="term" value="C:early endosome membrane"/>
    <property type="evidence" value="ECO:0007669"/>
    <property type="project" value="UniProtKB-SubCell"/>
</dbReference>
<dbReference type="GO" id="GO:0097386">
    <property type="term" value="C:glial cell projection"/>
    <property type="evidence" value="ECO:0000314"/>
    <property type="project" value="UniProtKB"/>
</dbReference>
<dbReference type="GO" id="GO:0000139">
    <property type="term" value="C:Golgi membrane"/>
    <property type="evidence" value="ECO:0007669"/>
    <property type="project" value="UniProtKB-SubCell"/>
</dbReference>
<dbReference type="GO" id="GO:0001891">
    <property type="term" value="C:phagocytic cup"/>
    <property type="evidence" value="ECO:0000314"/>
    <property type="project" value="Alzheimers_University_of_Toronto"/>
</dbReference>
<dbReference type="GO" id="GO:0005886">
    <property type="term" value="C:plasma membrane"/>
    <property type="evidence" value="ECO:0000250"/>
    <property type="project" value="Alzheimers_University_of_Toronto"/>
</dbReference>
<dbReference type="GO" id="GO:0032587">
    <property type="term" value="C:ruffle membrane"/>
    <property type="evidence" value="ECO:0000314"/>
    <property type="project" value="Alzheimers_University_of_Toronto"/>
</dbReference>
<dbReference type="GO" id="GO:0140359">
    <property type="term" value="F:ABC-type transporter activity"/>
    <property type="evidence" value="ECO:0007669"/>
    <property type="project" value="InterPro"/>
</dbReference>
<dbReference type="GO" id="GO:0034188">
    <property type="term" value="F:apolipoprotein A-I receptor activity"/>
    <property type="evidence" value="ECO:0000314"/>
    <property type="project" value="Alzheimers_University_of_Toronto"/>
</dbReference>
<dbReference type="GO" id="GO:0005524">
    <property type="term" value="F:ATP binding"/>
    <property type="evidence" value="ECO:0007669"/>
    <property type="project" value="UniProtKB-KW"/>
</dbReference>
<dbReference type="GO" id="GO:0016887">
    <property type="term" value="F:ATP hydrolysis activity"/>
    <property type="evidence" value="ECO:0007669"/>
    <property type="project" value="InterPro"/>
</dbReference>
<dbReference type="GO" id="GO:0005548">
    <property type="term" value="F:phospholipid transporter activity"/>
    <property type="evidence" value="ECO:0000314"/>
    <property type="project" value="MGI"/>
</dbReference>
<dbReference type="GO" id="GO:0150094">
    <property type="term" value="P:amyloid-beta clearance by cellular catabolic process"/>
    <property type="evidence" value="ECO:0000315"/>
    <property type="project" value="UniProtKB"/>
</dbReference>
<dbReference type="GO" id="GO:0034205">
    <property type="term" value="P:amyloid-beta formation"/>
    <property type="evidence" value="ECO:0000315"/>
    <property type="project" value="UniProtKB"/>
</dbReference>
<dbReference type="GO" id="GO:0038027">
    <property type="term" value="P:apolipoprotein A-I-mediated signaling pathway"/>
    <property type="evidence" value="ECO:0000314"/>
    <property type="project" value="Alzheimers_University_of_Toronto"/>
</dbReference>
<dbReference type="GO" id="GO:0033344">
    <property type="term" value="P:cholesterol efflux"/>
    <property type="evidence" value="ECO:0000315"/>
    <property type="project" value="UniProtKB"/>
</dbReference>
<dbReference type="GO" id="GO:0034380">
    <property type="term" value="P:high-density lipoprotein particle assembly"/>
    <property type="evidence" value="ECO:0000250"/>
    <property type="project" value="Alzheimers_University_of_Toronto"/>
</dbReference>
<dbReference type="GO" id="GO:0007613">
    <property type="term" value="P:memory"/>
    <property type="evidence" value="ECO:0000315"/>
    <property type="project" value="Alzheimers_University_of_Toronto"/>
</dbReference>
<dbReference type="GO" id="GO:0042985">
    <property type="term" value="P:negative regulation of amyloid precursor protein biosynthetic process"/>
    <property type="evidence" value="ECO:0000314"/>
    <property type="project" value="Alzheimers_University_of_Toronto"/>
</dbReference>
<dbReference type="GO" id="GO:1902430">
    <property type="term" value="P:negative regulation of amyloid-beta formation"/>
    <property type="evidence" value="ECO:0000314"/>
    <property type="project" value="Alzheimers_University_of_Toronto"/>
</dbReference>
<dbReference type="GO" id="GO:0045806">
    <property type="term" value="P:negative regulation of endocytosis"/>
    <property type="evidence" value="ECO:0000315"/>
    <property type="project" value="UniProtKB"/>
</dbReference>
<dbReference type="GO" id="GO:0043409">
    <property type="term" value="P:negative regulation of MAPK cascade"/>
    <property type="evidence" value="ECO:0000315"/>
    <property type="project" value="ARUK-UCL"/>
</dbReference>
<dbReference type="GO" id="GO:1903898">
    <property type="term" value="P:negative regulation of PERK-mediated unfolded protein response"/>
    <property type="evidence" value="ECO:0000315"/>
    <property type="project" value="ARUK-UCL"/>
</dbReference>
<dbReference type="GO" id="GO:0006909">
    <property type="term" value="P:phagocytosis"/>
    <property type="evidence" value="ECO:0007669"/>
    <property type="project" value="UniProtKB-KW"/>
</dbReference>
<dbReference type="GO" id="GO:0033700">
    <property type="term" value="P:phospholipid efflux"/>
    <property type="evidence" value="ECO:0000314"/>
    <property type="project" value="MGI"/>
</dbReference>
<dbReference type="GO" id="GO:0044857">
    <property type="term" value="P:plasma membrane raft organization"/>
    <property type="evidence" value="ECO:0000315"/>
    <property type="project" value="UniProtKB"/>
</dbReference>
<dbReference type="GO" id="GO:1900223">
    <property type="term" value="P:positive regulation of amyloid-beta clearance"/>
    <property type="evidence" value="ECO:0000315"/>
    <property type="project" value="Alzheimers_University_of_Toronto"/>
</dbReference>
<dbReference type="GO" id="GO:0010875">
    <property type="term" value="P:positive regulation of cholesterol efflux"/>
    <property type="evidence" value="ECO:0000314"/>
    <property type="project" value="Alzheimers_University_of_Toronto"/>
</dbReference>
<dbReference type="GO" id="GO:1901076">
    <property type="term" value="P:positive regulation of engulfment of apoptotic cell"/>
    <property type="evidence" value="ECO:0000315"/>
    <property type="project" value="Alzheimers_University_of_Toronto"/>
</dbReference>
<dbReference type="GO" id="GO:0070374">
    <property type="term" value="P:positive regulation of ERK1 and ERK2 cascade"/>
    <property type="evidence" value="ECO:0000315"/>
    <property type="project" value="Alzheimers_University_of_Toronto"/>
</dbReference>
<dbReference type="GO" id="GO:0050766">
    <property type="term" value="P:positive regulation of phagocytosis"/>
    <property type="evidence" value="ECO:0000315"/>
    <property type="project" value="UniProtKB"/>
</dbReference>
<dbReference type="GO" id="GO:1902995">
    <property type="term" value="P:positive regulation of phospholipid efflux"/>
    <property type="evidence" value="ECO:0000314"/>
    <property type="project" value="Alzheimers_University_of_Toronto"/>
</dbReference>
<dbReference type="GO" id="GO:2000010">
    <property type="term" value="P:positive regulation of protein localization to cell surface"/>
    <property type="evidence" value="ECO:0000315"/>
    <property type="project" value="UniProtKB"/>
</dbReference>
<dbReference type="GO" id="GO:0034504">
    <property type="term" value="P:protein localization to nucleus"/>
    <property type="evidence" value="ECO:0000314"/>
    <property type="project" value="Alzheimers_University_of_Toronto"/>
</dbReference>
<dbReference type="GO" id="GO:0019216">
    <property type="term" value="P:regulation of lipid metabolic process"/>
    <property type="evidence" value="ECO:0000315"/>
    <property type="project" value="ARUK-UCL"/>
</dbReference>
<dbReference type="GO" id="GO:0008542">
    <property type="term" value="P:visual learning"/>
    <property type="evidence" value="ECO:0000315"/>
    <property type="project" value="ARUK-UCL"/>
</dbReference>
<dbReference type="CDD" id="cd03263">
    <property type="entry name" value="ABC_subfamily_A"/>
    <property type="match status" value="2"/>
</dbReference>
<dbReference type="FunFam" id="3.40.50.300:FF:001235">
    <property type="entry name" value="ATP binding cassette subfamily A member 7"/>
    <property type="match status" value="1"/>
</dbReference>
<dbReference type="FunFam" id="3.40.50.300:FF:000511">
    <property type="entry name" value="ATP-binding cassette, sub-family A (ABC1), member 2"/>
    <property type="match status" value="1"/>
</dbReference>
<dbReference type="Gene3D" id="3.40.50.300">
    <property type="entry name" value="P-loop containing nucleotide triphosphate hydrolases"/>
    <property type="match status" value="2"/>
</dbReference>
<dbReference type="InterPro" id="IPR003593">
    <property type="entry name" value="AAA+_ATPase"/>
</dbReference>
<dbReference type="InterPro" id="IPR013525">
    <property type="entry name" value="ABC2_TM"/>
</dbReference>
<dbReference type="InterPro" id="IPR003439">
    <property type="entry name" value="ABC_transporter-like_ATP-bd"/>
</dbReference>
<dbReference type="InterPro" id="IPR017871">
    <property type="entry name" value="ABC_transporter-like_CS"/>
</dbReference>
<dbReference type="InterPro" id="IPR026082">
    <property type="entry name" value="ABCA"/>
</dbReference>
<dbReference type="InterPro" id="IPR027417">
    <property type="entry name" value="P-loop_NTPase"/>
</dbReference>
<dbReference type="InterPro" id="IPR056264">
    <property type="entry name" value="R2_ABCA1-4-like"/>
</dbReference>
<dbReference type="PANTHER" id="PTHR19229:SF250">
    <property type="entry name" value="ABC TRANSPORTER DOMAIN-CONTAINING PROTEIN-RELATED"/>
    <property type="match status" value="1"/>
</dbReference>
<dbReference type="PANTHER" id="PTHR19229">
    <property type="entry name" value="ATP-BINDING CASSETTE TRANSPORTER SUBFAMILY A ABCA"/>
    <property type="match status" value="1"/>
</dbReference>
<dbReference type="Pfam" id="PF12698">
    <property type="entry name" value="ABC2_membrane_3"/>
    <property type="match status" value="2"/>
</dbReference>
<dbReference type="Pfam" id="PF00005">
    <property type="entry name" value="ABC_tran"/>
    <property type="match status" value="2"/>
</dbReference>
<dbReference type="Pfam" id="PF23321">
    <property type="entry name" value="R1_ABCA1"/>
    <property type="match status" value="1"/>
</dbReference>
<dbReference type="SMART" id="SM00382">
    <property type="entry name" value="AAA"/>
    <property type="match status" value="2"/>
</dbReference>
<dbReference type="SUPFAM" id="SSF52540">
    <property type="entry name" value="P-loop containing nucleoside triphosphate hydrolases"/>
    <property type="match status" value="2"/>
</dbReference>
<dbReference type="PROSITE" id="PS00211">
    <property type="entry name" value="ABC_TRANSPORTER_1"/>
    <property type="match status" value="1"/>
</dbReference>
<dbReference type="PROSITE" id="PS50893">
    <property type="entry name" value="ABC_TRANSPORTER_2"/>
    <property type="match status" value="2"/>
</dbReference>
<protein>
    <recommendedName>
        <fullName>ATP-binding cassette sub-family A member 7</fullName>
    </recommendedName>
</protein>
<proteinExistence type="evidence at protein level"/>
<reference key="1">
    <citation type="journal article" date="2001" name="Cytogenet. Cell Genet.">
        <title>Comparative analysis of the promoter structure and genomic organization of the human and mouse ABCA7 gene encoding a novel ABCA transporter.</title>
        <authorList>
            <person name="Broccardo C."/>
            <person name="Osorio J."/>
            <person name="Luciani M.-F."/>
            <person name="Schriml L.M."/>
            <person name="Prades C."/>
            <person name="Shulenin S."/>
            <person name="Arnould I."/>
            <person name="Naudin L."/>
            <person name="Lafargue C."/>
            <person name="Rosier M."/>
            <person name="Jordan B."/>
            <person name="Mattei M.-G."/>
            <person name="Dean M."/>
            <person name="Denefle P."/>
            <person name="Chimini G."/>
        </authorList>
    </citation>
    <scope>NUCLEOTIDE SEQUENCE [GENOMIC DNA / MRNA]</scope>
    <scope>TISSUE SPECIFICITY</scope>
    <scope>DEVELOPMENTAL STAGE</scope>
    <source>
        <strain>DBA/2J</strain>
        <tissue>Lymphoma</tissue>
    </source>
</reference>
<reference key="2">
    <citation type="journal article" date="2000" name="Genomics">
        <title>Identification of 18 mouse ABC genes and characterization of the ABC superfamily in Mus musculus.</title>
        <authorList>
            <person name="Schriml L.M."/>
            <person name="Dean M."/>
        </authorList>
    </citation>
    <scope>NUCLEOTIDE SEQUENCE [MRNA] OF 1920-2159</scope>
    <source>
        <strain>C57BL/6J</strain>
    </source>
</reference>
<reference key="3">
    <citation type="journal article" date="2003" name="J. Biol. Chem.">
        <title>ATP-binding cassette transporter A7 (ABCA7) binds apolipoprotein A-I and mediates cellular phospholipid but not cholesterol efflux.</title>
        <authorList>
            <person name="Wang N."/>
            <person name="Lan D."/>
            <person name="Gerbod-Giannone M."/>
            <person name="Linsel-Nitschke P."/>
            <person name="Jehle A.W."/>
            <person name="Chen W."/>
            <person name="Martinez L.O."/>
            <person name="Tall A.R."/>
        </authorList>
    </citation>
    <scope>FUNCTION</scope>
    <scope>TISSUE SPECIFICITY</scope>
    <scope>SUBCELLULAR LOCATION</scope>
</reference>
<reference key="4">
    <citation type="journal article" date="2005" name="Clin. Exp. Pharmacol. Physiol.">
        <title>Acute digoxin loading reduces ABCA8A mRNA expression in the mouse liver.</title>
        <authorList>
            <person name="Wakaumi M."/>
            <person name="Ishibashi K."/>
            <person name="Ando H."/>
            <person name="Kasanuki H."/>
            <person name="Tsuruoka S."/>
        </authorList>
    </citation>
    <scope>INDUCTION</scope>
</reference>
<reference key="5">
    <citation type="journal article" date="2005" name="J. Biol. Chem.">
        <title>Abca7 null mice retain normal macrophage phosphatidylcholine and cholesterol efflux activity despite alterations in adipose mass and serum cholesterol levels.</title>
        <authorList>
            <person name="Kim W.S."/>
            <person name="Fitzgerald M.L."/>
            <person name="Kang K."/>
            <person name="Okuhira K."/>
            <person name="Bell S.A."/>
            <person name="Manning J.J."/>
            <person name="Koehn S.L."/>
            <person name="Lu N."/>
            <person name="Moore K.J."/>
            <person name="Freeman M.W."/>
        </authorList>
    </citation>
    <scope>FUNCTION</scope>
    <scope>TISSUE SPECIFICITY</scope>
    <scope>DISRUPTION PHENOTYPE</scope>
</reference>
<reference key="6">
    <citation type="journal article" date="2006" name="J. Cell Biol.">
        <title>ATP-binding cassette transporter A7 enhances phagocytosis of apoptotic cells and associated ERK signaling in macrophages.</title>
        <authorList>
            <person name="Jehle A.W."/>
            <person name="Gardai S.J."/>
            <person name="Li S."/>
            <person name="Linsel-Nitschke P."/>
            <person name="Morimoto K."/>
            <person name="Janssen W.J."/>
            <person name="Vandivier R.W."/>
            <person name="Wang N."/>
            <person name="Greenberg S."/>
            <person name="Dale B.M."/>
            <person name="Qin C."/>
            <person name="Henson P.M."/>
            <person name="Tall A.R."/>
        </authorList>
    </citation>
    <scope>FUNCTION</scope>
    <scope>SUBCELLULAR LOCATION</scope>
    <scope>DISRUPTION PHENOTYPE</scope>
</reference>
<reference key="7">
    <citation type="journal article" date="2009" name="Immunity">
        <title>The phagosomal proteome in interferon-gamma-activated macrophages.</title>
        <authorList>
            <person name="Trost M."/>
            <person name="English L."/>
            <person name="Lemieux S."/>
            <person name="Courcelles M."/>
            <person name="Desjardins M."/>
            <person name="Thibault P."/>
        </authorList>
    </citation>
    <scope>IDENTIFICATION BY MASS SPECTROMETRY [LARGE SCALE ANALYSIS]</scope>
</reference>
<reference key="8">
    <citation type="journal article" date="2010" name="Cell">
        <title>A tissue-specific atlas of mouse protein phosphorylation and expression.</title>
        <authorList>
            <person name="Huttlin E.L."/>
            <person name="Jedrychowski M.P."/>
            <person name="Elias J.E."/>
            <person name="Goswami T."/>
            <person name="Rad R."/>
            <person name="Beausoleil S.A."/>
            <person name="Villen J."/>
            <person name="Haas W."/>
            <person name="Sowa M.E."/>
            <person name="Gygi S.P."/>
        </authorList>
    </citation>
    <scope>IDENTIFICATION BY MASS SPECTROMETRY [LARGE SCALE ANALYSIS]</scope>
    <source>
        <tissue>Brain</tissue>
        <tissue>Lung</tissue>
    </source>
</reference>
<reference key="9">
    <citation type="journal article" date="2010" name="J. Lipid Res.">
        <title>Helical apolipoproteins of high-density lipoprotein enhance phagocytosis by stabilizing ATP-binding cassette transporter A7.</title>
        <authorList>
            <person name="Tanaka N."/>
            <person name="Abe-Dohmae S."/>
            <person name="Iwamoto N."/>
            <person name="Fitzgerald M.L."/>
            <person name="Yokoyama S."/>
        </authorList>
    </citation>
    <scope>FUNCTION</scope>
    <scope>SUBCELLULAR LOCATION</scope>
    <scope>GLYCOSYLATION</scope>
    <scope>DISRUPTION PHENOTYPE</scope>
</reference>
<reference key="10">
    <citation type="journal article" date="2015" name="J. Biol. Chem.">
        <title>ATP-binding cassette transporter A7 (ABCA7) loss of function alters Alzheimer amyloid processing.</title>
        <authorList>
            <person name="Satoh K."/>
            <person name="Abe-Dohmae S."/>
            <person name="Yokoyama S."/>
            <person name="St George-Hyslop P."/>
            <person name="Fraser P.E."/>
        </authorList>
    </citation>
    <scope>FUNCTION</scope>
    <scope>SUBCELLULAR LOCATION</scope>
    <scope>TISSUE SPECIFICITY</scope>
    <scope>DEVELOPMENTAL STAGE</scope>
    <scope>DISRUPTION PHENOTYPE</scope>
</reference>
<reference key="11">
    <citation type="journal article" date="2016" name="J. Alzheimers Dis.">
        <title>ABCA7 Mediates Phagocytic Clearance of Amyloid-beta in the Brain.</title>
        <authorList>
            <person name="Fu Y."/>
            <person name="Hsiao J.H."/>
            <person name="Paxinos G."/>
            <person name="Halliday G.M."/>
            <person name="Kim W.S."/>
        </authorList>
    </citation>
    <scope>FUNCTION</scope>
    <scope>SUBCELLULAR LOCATION</scope>
    <scope>TISSUE SPECIFICITY</scope>
    <scope>INDUCTION</scope>
    <scope>DISRUPTION PHENOTYPE</scope>
</reference>
<reference key="12">
    <citation type="journal article" date="2016" name="J. Neurosci.">
        <title>ABCA7 Deficiency Accelerates Amyloid-beta Generation and Alzheimer's Neuronal Pathology.</title>
        <authorList>
            <person name="Sakae N."/>
            <person name="Liu C.C."/>
            <person name="Shinohara M."/>
            <person name="Frisch-Daiello J."/>
            <person name="Ma L."/>
            <person name="Yamazaki Y."/>
            <person name="Tachibana M."/>
            <person name="Younkin L."/>
            <person name="Kurti A."/>
            <person name="Carrasquillo M.M."/>
            <person name="Zou F."/>
            <person name="Sevlever D."/>
            <person name="Bisceglio G."/>
            <person name="Gan M."/>
            <person name="Fol R."/>
            <person name="Knight P."/>
            <person name="Wang M."/>
            <person name="Han X."/>
            <person name="Fryer J.D."/>
            <person name="Fitzgerald M.L."/>
            <person name="Ohyagi Y."/>
            <person name="Younkin S.G."/>
            <person name="Bu G."/>
            <person name="Kanekiyo T."/>
        </authorList>
    </citation>
    <scope>FUNCTION</scope>
    <scope>DISRUPTION PHENOTYPE</scope>
</reference>
<reference key="13">
    <citation type="journal article" date="2017" name="Sci. Rep.">
        <title>ATP Binding Cassette Transporter ABCA7 Regulates NKT Cell Development and Function by Controlling CD1d Expression and Lipid Raft Content.</title>
        <authorList>
            <person name="Nowyhed H.N."/>
            <person name="Chandra S."/>
            <person name="Kiosses W."/>
            <person name="Marcovecchio P."/>
            <person name="Andary F."/>
            <person name="Zhao M."/>
            <person name="Fitzgerald M.L."/>
            <person name="Kronenberg M."/>
            <person name="Hedrick C.C."/>
        </authorList>
    </citation>
    <scope>FUNCTION</scope>
    <scope>TISSUE SPECIFICITY</scope>
    <scope>DISRUPTION PHENOTYPE</scope>
</reference>
<name>ABCA7_MOUSE</name>
<organism>
    <name type="scientific">Mus musculus</name>
    <name type="common">Mouse</name>
    <dbReference type="NCBI Taxonomy" id="10090"/>
    <lineage>
        <taxon>Eukaryota</taxon>
        <taxon>Metazoa</taxon>
        <taxon>Chordata</taxon>
        <taxon>Craniata</taxon>
        <taxon>Vertebrata</taxon>
        <taxon>Euteleostomi</taxon>
        <taxon>Mammalia</taxon>
        <taxon>Eutheria</taxon>
        <taxon>Euarchontoglires</taxon>
        <taxon>Glires</taxon>
        <taxon>Rodentia</taxon>
        <taxon>Myomorpha</taxon>
        <taxon>Muroidea</taxon>
        <taxon>Muridae</taxon>
        <taxon>Murinae</taxon>
        <taxon>Mus</taxon>
        <taxon>Mus</taxon>
    </lineage>
</organism>
<accession>Q91V24</accession>
<accession>Q9JL36</accession>
<evidence type="ECO:0000250" key="1"/>
<evidence type="ECO:0000250" key="2">
    <source>
        <dbReference type="UniProtKB" id="Q8IZY2"/>
    </source>
</evidence>
<evidence type="ECO:0000255" key="3"/>
<evidence type="ECO:0000255" key="4">
    <source>
        <dbReference type="PROSITE-ProRule" id="PRU00434"/>
    </source>
</evidence>
<evidence type="ECO:0000256" key="5">
    <source>
        <dbReference type="SAM" id="MobiDB-lite"/>
    </source>
</evidence>
<evidence type="ECO:0000269" key="6">
    <source>
    </source>
</evidence>
<evidence type="ECO:0000269" key="7">
    <source>
    </source>
</evidence>
<evidence type="ECO:0000269" key="8">
    <source>
    </source>
</evidence>
<evidence type="ECO:0000269" key="9">
    <source>
    </source>
</evidence>
<evidence type="ECO:0000269" key="10">
    <source>
    </source>
</evidence>
<evidence type="ECO:0000269" key="11">
    <source>
    </source>
</evidence>
<evidence type="ECO:0000269" key="12">
    <source>
    </source>
</evidence>
<evidence type="ECO:0000269" key="13">
    <source>
    </source>
</evidence>
<evidence type="ECO:0000269" key="14">
    <source>
    </source>
</evidence>
<evidence type="ECO:0000269" key="15">
    <source>
    </source>
</evidence>
<evidence type="ECO:0000305" key="16"/>
<feature type="chain" id="PRO_0000250675" description="ATP-binding cassette sub-family A member 7">
    <location>
        <begin position="1"/>
        <end position="2159"/>
    </location>
</feature>
<feature type="transmembrane region" description="Helical" evidence="3">
    <location>
        <begin position="22"/>
        <end position="42"/>
    </location>
</feature>
<feature type="topological domain" description="Extracellular" evidence="1">
    <location>
        <begin position="43"/>
        <end position="546"/>
    </location>
</feature>
<feature type="transmembrane region" description="Helical" evidence="3">
    <location>
        <begin position="547"/>
        <end position="567"/>
    </location>
</feature>
<feature type="transmembrane region" description="Helical" evidence="3">
    <location>
        <begin position="590"/>
        <end position="610"/>
    </location>
</feature>
<feature type="transmembrane region" description="Helical" evidence="3">
    <location>
        <begin position="623"/>
        <end position="643"/>
    </location>
</feature>
<feature type="transmembrane region" description="Helical" evidence="3">
    <location>
        <begin position="652"/>
        <end position="672"/>
    </location>
</feature>
<feature type="transmembrane region" description="Helical" evidence="3">
    <location>
        <begin position="678"/>
        <end position="698"/>
    </location>
</feature>
<feature type="transmembrane region" description="Helical" evidence="3">
    <location>
        <begin position="732"/>
        <end position="752"/>
    </location>
</feature>
<feature type="transmembrane region" description="Helical" evidence="3">
    <location>
        <begin position="846"/>
        <end position="866"/>
    </location>
</feature>
<feature type="transmembrane region" description="Helical" evidence="3">
    <location>
        <begin position="1246"/>
        <end position="1266"/>
    </location>
</feature>
<feature type="topological domain" description="Extracellular" evidence="1">
    <location>
        <begin position="1267"/>
        <end position="1551"/>
    </location>
</feature>
<feature type="transmembrane region" description="Helical" evidence="3">
    <location>
        <begin position="1552"/>
        <end position="1572"/>
    </location>
</feature>
<feature type="transmembrane region" description="Helical" evidence="3">
    <location>
        <begin position="1598"/>
        <end position="1618"/>
    </location>
</feature>
<feature type="transmembrane region" description="Helical" evidence="3">
    <location>
        <begin position="1635"/>
        <end position="1655"/>
    </location>
</feature>
<feature type="transmembrane region" description="Helical" evidence="3">
    <location>
        <begin position="1663"/>
        <end position="1683"/>
    </location>
</feature>
<feature type="transmembrane region" description="Helical" evidence="3">
    <location>
        <begin position="1743"/>
        <end position="1763"/>
    </location>
</feature>
<feature type="domain" description="ABC transporter 1" evidence="4">
    <location>
        <begin position="804"/>
        <end position="1035"/>
    </location>
</feature>
<feature type="domain" description="ABC transporter 2" evidence="4">
    <location>
        <begin position="1807"/>
        <end position="2039"/>
    </location>
</feature>
<feature type="region of interest" description="Disordered" evidence="5">
    <location>
        <begin position="1042"/>
        <end position="1088"/>
    </location>
</feature>
<feature type="region of interest" description="Disordered" evidence="5">
    <location>
        <begin position="1172"/>
        <end position="1192"/>
    </location>
</feature>
<feature type="region of interest" description="Disordered" evidence="5">
    <location>
        <begin position="2118"/>
        <end position="2159"/>
    </location>
</feature>
<feature type="compositionally biased region" description="Basic and acidic residues" evidence="5">
    <location>
        <begin position="1044"/>
        <end position="1061"/>
    </location>
</feature>
<feature type="compositionally biased region" description="Polar residues" evidence="5">
    <location>
        <begin position="1062"/>
        <end position="1081"/>
    </location>
</feature>
<feature type="compositionally biased region" description="Acidic residues" evidence="5">
    <location>
        <begin position="2119"/>
        <end position="2133"/>
    </location>
</feature>
<feature type="binding site" evidence="4">
    <location>
        <begin position="838"/>
        <end position="845"/>
    </location>
    <ligand>
        <name>ATP</name>
        <dbReference type="ChEBI" id="CHEBI:30616"/>
        <label>1</label>
    </ligand>
</feature>
<feature type="binding site" evidence="4">
    <location>
        <begin position="1841"/>
        <end position="1848"/>
    </location>
    <ligand>
        <name>ATP</name>
        <dbReference type="ChEBI" id="CHEBI:30616"/>
        <label>2</label>
    </ligand>
</feature>
<feature type="glycosylation site" description="N-linked (GlcNAc...) asparagine" evidence="3">
    <location>
        <position position="309"/>
    </location>
</feature>
<feature type="disulfide bond" evidence="1">
    <location>
        <begin position="75"/>
        <end position="222"/>
    </location>
</feature>
<feature type="disulfide bond" evidence="1">
    <location>
        <begin position="1359"/>
        <end position="1373"/>
    </location>
</feature>
<feature type="sequence conflict" description="In Ref. 2; AAF31434." evidence="16" ref="2">
    <original>N</original>
    <variation>D</variation>
    <location>
        <position position="1944"/>
    </location>
</feature>
<feature type="sequence conflict" description="In Ref. 2; AAF31434." evidence="16" ref="2">
    <original>A</original>
    <variation>R</variation>
    <location>
        <position position="2004"/>
    </location>
</feature>
<feature type="sequence conflict" description="In Ref. 2; AAF31434." evidence="16" ref="2">
    <original>L</original>
    <variation>M</variation>
    <location>
        <position position="2069"/>
    </location>
</feature>
<keyword id="KW-0067">ATP-binding</keyword>
<keyword id="KW-1003">Cell membrane</keyword>
<keyword id="KW-0966">Cell projection</keyword>
<keyword id="KW-0963">Cytoplasm</keyword>
<keyword id="KW-1015">Disulfide bond</keyword>
<keyword id="KW-0967">Endosome</keyword>
<keyword id="KW-0325">Glycoprotein</keyword>
<keyword id="KW-0333">Golgi apparatus</keyword>
<keyword id="KW-0445">Lipid transport</keyword>
<keyword id="KW-0472">Membrane</keyword>
<keyword id="KW-0547">Nucleotide-binding</keyword>
<keyword id="KW-0581">Phagocytosis</keyword>
<keyword id="KW-1185">Reference proteome</keyword>
<keyword id="KW-0677">Repeat</keyword>
<keyword id="KW-0812">Transmembrane</keyword>
<keyword id="KW-1133">Transmembrane helix</keyword>
<keyword id="KW-0813">Transport</keyword>
<comment type="function">
    <text evidence="2 7 8 10 11 12 13 14 15">Probable ATP-binding cassette (ABC) transporter that plays a role in lipid homeostasis and macrophage-mediated phagocytosis (PubMed:12917409, PubMed:15550377, PubMed:16908670, PubMed:20495215, PubMed:27030769, PubMed:27472885). Binds APOA1 and may function in apolipoprotein-mediated phospholipid efflux from cells (PubMed:12917409). May also mediate cholesterol efflux (By similarity). May regulate cellular ceramide homeostasis during keratinocyte differentiation (By similarity). Involved in lipid raft organization and CD1D localization on thymocytes and antigen-presenting cells, which plays an important role in natural killer T-cell development and activation (PubMed:28091533). Plays a role in phagocytosis of apoptotic cells by macrophages (PubMed:16908670). Macrophage phagocytosis is stimulated by APOA1 or APOA2, probably by stabilization of ABCA7 (PubMed:20495215). Also involved in phagocytic clearance of amyloid-beta by microglia cells and macrophages (PubMed:27472885). Further limits amyloid-beta production by playing a role in the regulation of amyloid-beta A4 precursor protein (APP) endocytosis and/or processing (PubMed:26260791, PubMed:27030769).</text>
</comment>
<comment type="subcellular location">
    <subcellularLocation>
        <location evidence="7 11 12">Cell membrane</location>
        <topology evidence="3">Multi-pass membrane protein</topology>
    </subcellularLocation>
    <subcellularLocation>
        <location evidence="10">Golgi apparatus membrane</location>
        <topology evidence="3">Multi-pass membrane protein</topology>
    </subcellularLocation>
    <subcellularLocation>
        <location evidence="10">Early endosome membrane</location>
        <topology evidence="3">Multi-pass membrane protein</topology>
    </subcellularLocation>
    <subcellularLocation>
        <location evidence="14">Cytoplasm</location>
    </subcellularLocation>
    <subcellularLocation>
        <location evidence="10">Cell projection</location>
        <location evidence="10">Ruffle membrane</location>
    </subcellularLocation>
    <subcellularLocation>
        <location evidence="10">Cell projection</location>
        <location evidence="10">Phagocytic cup</location>
    </subcellularLocation>
    <text evidence="10 16">Localizes to cell membrane ruffles and phagocytic cups of macrophages stimulated with C1q or apoptotic cells. Localizes to the cytoplasm of resting macrophages, probably in Golgi and endosomes (PubMed:16908670). Localizes to the apical brush border of cells in the proximal tubules of kidney (Probable).</text>
</comment>
<comment type="tissue specificity">
    <text evidence="6 7 8 12 14 15">Widely expressed with higher expression in brain, lung, adrenal gland, spleen and hematopoietic tissues (at protein level) (PubMed:12917409, PubMed:15550377, PubMed:27472885). In the brain, expressed in cortex, cerebellum, hippocampus, olfactory bulb, neurons, astrocytes and microglia (at protein level) (PubMed:26260791). Also expressed in adipocytes and macrophages (at protein level) (PubMed:15550377, PubMed:27472885). Expressed in thymocytes (at protein level) (PubMed:28091533). Highly expressed in spleen and hematopoietic tissues (PubMed:11435699). Expressed in brain, lung, macrophages, microglia, oligodendrocytes and neurons (PubMed:27472885).</text>
</comment>
<comment type="developmental stage">
    <text evidence="6 12">Widely expressed during embryogenesis (PubMed:11435699). Expressed in newborn mice with increasing expression from 4 to 24 weeks of age (PubMed:26260791).</text>
</comment>
<comment type="induction">
    <text evidence="9 14">Up-regulated during differentiation from monocytes to macrophages (PubMed:27472885). Down-regulated by digoxin.</text>
</comment>
<comment type="PTM">
    <text evidence="11">N-glycosylated.</text>
</comment>
<comment type="disruption phenotype">
    <text evidence="8 10 11 12 13 14 15">According to one study, knockout mice are not viable and heterozygous knockout mice display impaired phagocytosis of apoptotic cells (PubMed:16908670). However, another study shows that knockout mice are viable and females have less visceral fat and lower total serum and high density lipoprotein cholesterol level (PubMed:15550377). Knockout mice exhibit altered lipid profile in mouse brains, compromised spatial memory and increased BACE1 activity (PubMed:27030769). Display an increase in amyloid-beta protein 42 (Abeta42) from 4 to 24 weeks of age, whereas amyloid-beta protein 40 (Abeta40) is increased at 4 weeks and decreased at 24 weeks of age (PubMed:26260791). Increased endocytotic uptake of APP into endosomes in primary microglia cells (PubMed:26260791). Reduced phagocytic uptake of Abeta42 and Abeta40 by microglia cells and phagocytes (PubMed:27472885). Decreased macrophage phagocytosis in the peritoneal cavity (PubMed:20495215). Decreased surface CD1D expression on double positive thymocytes, on antigen-presenting thymocytes, on peripheral antigen-presenting cells in the spleen and on peritoneal macrophages (PubMed:28091533). Increased accumulation of CD1D to late endosomes (PubMed:28091533). Impaired natural killer T (NKT) cell development with a 2-fold decrease in frequencies and total numbers of NKT cells in the thymus and a reduction of peripheral NKT cells in spleen and liver (PubMed:28091533). Reduced proliferation during early stages of NKT development and reduced expression of Egr2 in NKT cells (PubMed:28091533). Decreased number of plasma membrane lipid rafts on thymocytes and a reduction of CAV1 and CD1D clusters in macrophages (PubMed:28091533). RNAi-mediated knockdown reduces phagocytosis of apoptotic cells by macrophages (PubMed:16908670).</text>
</comment>
<comment type="similarity">
    <text evidence="16">Belongs to the ABC transporter superfamily. ABCA family.</text>
</comment>
<comment type="caution">
    <text evidence="7 8 14">There are conflicting results concerning the role of ABCA7 in lipid transport. ABCA7 was described to play a role in apolipoprotein-mediated phospholipid and cholesterol efflux when expressed in HEK293 cells (PubMed:12917409, PubMed:27472885). However, another report shows that ABCA7 deficiency does not influence cholesterol and phospholipid efflux in mouse primary macrophages, but leads to lower serum HDL cholesterol levels and a reduction in fat mass in female mice (PubMed:15550377).</text>
</comment>
<comment type="sequence caution" evidence="16">
    <conflict type="frameshift">
        <sequence resource="EMBL-CDS" id="AAF31434"/>
    </conflict>
</comment>
<sequence>MALGTQLMLLLWKNYTYRRRQPIQLLVELLWPLFLFFILVAVRHSHPPLEHHECHFPNKPLPSAGTVPWLQGLVCNVNNSCFQHPTPGEKPGVLSNFKDSLISRLLADTRTVLGGHSIQDMLDALGKLIPVLRAVGGGARPQESDQPTSQGSVTKLLEKILQRASLDPVLGQAQDSMRKFSDAIRDLAQELLTLPSLMELRALLRRPRGSAGSLELVSEALCSTKGPSSPGGLSLNWYEANQLNEFMGPEVAPALPDNSLSPACSEFVGTLDDHPVSRLLWRRLKPLILGKILFAPDTNFTRKLMAQVNQTFEELALLRDLHELWGVLGPQIFNFMNDSTNVAMLQRLLDVGGTGQRQQTPRAQKKLEAIKDFLDPSRGGYSWREAHADMGRLAGILGQMMECVSLDKLEAVPSEEALVSRALELLGERRLWAGIVFLSPEHPLDPSELSSPALSPGHLRFKIRMDIDDVTRTNKIRDKFWDPGPSADPFMDLRYVWGGFVYLQDLLEQAAVRVLGGGNSRTGLYLQQMPHPCYVDDVFLRVLSRSLPLFLTLAWIYSVALTVKAVVREKETRLRETMRAMGLSRAVLWLGWFLSCLGPFLVSAALLVLVLKLGNILPYSHPVVIFLFLAAFAVATVAQSFLLSAFFSRANLAAACGGLAYFALYLPYVLCVAWRERLHLGGLLAASLLSPVAFGFGCESLALLEEQGDGAQWHNLGTGPAEDVFSLAQVSAFLLLDAVIYGLALWYLEAVCPGQYGIPEPWNFPFRRSYWCGPGPPKSSVLAPAPQDPKVLVEEPPLGLVPGVSIRGLKKHFRGCPQPALQGLNLDFYEGHITAFLGHNGAGKTTTLSILSGLFPPSSGSASILGHDVQTNMAAIRPHLGICPQYNVLFDMLTVEEHVWFYGRLKGVSAAAMGPERERLIRDVGLTLKRDTQTRHLSGGMQRKLSVAIAFVGGSRVVIMDEPTAGVDPASRRGIWELLLKYREGRTLILSTHHLDEAELLGDRVAMVAGGSLCCCGSPLFLRRHLGCGYYLTLVKSSQSLVTHDAKGDSEDPRREKKSDGNGRTSDTAFTRGTSDKSNQAPAPGAVPITPSTARILELVQQHVPGAQLVEDLPHELLLVLPYAGALDGSFAMVFQELDQQLELLGLTGYGISDTNLEEIFLKVVEDAHREGGDSRPQLHLRTCTPQPPTGPEASVLENGELAPQGLAPNAAQVQGWTLTCQQLRALLHKRFLLARRSRRGLFAQVVLPALFVGLALFFSLIVPPFGQYPPLQLSPAMYGPQVSFFSEDAPGDPNRMKLLEALLGEAGLQEPSMQDKDARGSECTHSLACYFTVPEVPPDVASILASGNWTPESPSPACQCSQPGARRLLPDCPAGAGGPPPPQAVAGLGEVVQNLTGRNVSDFLVKTYPSLVRRGLKTKKWVDEVRYGGFSLGGRDPDLPTGHEVVRTLAEIRALLSPQPGNALDRILNNLTQWALGLDARNSLKIWFNNKGWHAMVAFVNRANNGLLHALLPSGPVRHAHSITTLNHPLNLTKEQLSEATLIASSVDVLVSICVVFAMSFVPASFTLVLIEERITRAKHLQLVSGLPQTLYWLGNFLWDMCNYLVAVCIVVFIFLAFQQRAYVAPENLPALLLLLLLYGWSITPLMYPASFFFSVPSTAYVVLTCINLFIGINSSMATFVLELLSDQNLQEVSRILKQVFLIFPHFCLGRGLIDMVRNQAMADAFERLGDKQFQSPLRWDIIGKNLLAMMAQGPLFLLITLLLQHRNRLLPQSKPRLLPPLGEEDEDVAQERERVTKGATQGDVLVLRDLTKVYRGQRNPAVDRLCLGIPPGECFGLLGVNGAGKTSTFRMVTGDTLPSSGEAVLAGHNVAQERSAAHRSMGYCPQSDAIFDLLTGREHLELFARLRGVPEAQVAQTALSGLVRLGLPSYADRPAGTYSGGNKRKLATALALVGDPAVVFLDEPTTGMDPSARRFLWNSLLSVVREGRSVVLTSHSMEECEALCTRLAIMVNGRFRCLGSSQHLKGRFGAGHTLTLRVPPDQPEPAIAFIRITFPGAELREVHGSRLRFQLPPGGRCTLTRVFRELAAQGRAHGVEDFSVSQTTLEEVFLYFSKDQGEEEESSRQEAEEEEVSKPGRQHPKRVSRFLEDPSSVETMI</sequence>